<proteinExistence type="evidence at protein level"/>
<name>TPL_SYMTH</name>
<accession>Q08897</accession>
<accession>Q67KH1</accession>
<evidence type="ECO:0000250" key="1"/>
<evidence type="ECO:0000305" key="2"/>
<comment type="catalytic activity">
    <reaction>
        <text>L-tyrosine + H2O = phenol + pyruvate + NH4(+)</text>
        <dbReference type="Rhea" id="RHEA:21704"/>
        <dbReference type="ChEBI" id="CHEBI:15361"/>
        <dbReference type="ChEBI" id="CHEBI:15377"/>
        <dbReference type="ChEBI" id="CHEBI:15882"/>
        <dbReference type="ChEBI" id="CHEBI:28938"/>
        <dbReference type="ChEBI" id="CHEBI:58315"/>
        <dbReference type="EC" id="4.1.99.2"/>
    </reaction>
</comment>
<comment type="cofactor">
    <cofactor>
        <name>pyridoxal 5'-phosphate</name>
        <dbReference type="ChEBI" id="CHEBI:597326"/>
    </cofactor>
</comment>
<comment type="biophysicochemical properties">
    <temperatureDependence>
        <text>Thermostable.</text>
    </temperatureDependence>
</comment>
<comment type="subunit">
    <text>Homotetramer.</text>
</comment>
<comment type="similarity">
    <text evidence="2">Belongs to the beta-eliminating lyase family.</text>
</comment>
<comment type="sequence caution" evidence="2">
    <conflict type="erroneous initiation">
        <sequence resource="EMBL-CDS" id="BAD41827"/>
    </conflict>
</comment>
<sequence>MQRPWAEPYKIKAVEPIRMTTREYREQAIREAGYNTFLLRSEDVYIDLLTDSGTNAMSDRQWGALMMGDEAYAGARSFFRLEEAVREIYGFKYVVPTHQGRGAEHLISRILIKPGDYIPGNMYFTTTRTHQELQGGTFVDVIIDEAHDPQASHPFKGNVDIAKFEALIDRVGADKIPYINVALTVNMAGGQPVSMANLREVRKVCDRHGIRMWSDATRAVENAYFIKEREEGYQDKPVREILKEMMSYFDGCTMSGKKDCLVNIGGFLAMNEEWILQKAREQVVIFEGMPTYGGLAGRDMEAIAQGIYEMVDDDYIAHRIHQVRYLGEQLLEAGIPIVQPIGGHAVFLDARAFLPHIPQDQFPAQALAAALYVDSGVRAMERGIVSAGRNPQTGEHNYPKLELVRLTIPRRVYTDRHMDVVAYSVKHLWKERDTIRGLRMVYEPPTLRFFTARFEPIS</sequence>
<feature type="chain" id="PRO_0000195638" description="Tyrosine phenol-lyase">
    <location>
        <begin position="1"/>
        <end position="458"/>
    </location>
</feature>
<feature type="modified residue" description="N6-(pyridoxal phosphate)lysine" evidence="1">
    <location>
        <position position="258"/>
    </location>
</feature>
<feature type="sequence conflict" description="In Ref. 1; BAA02365." evidence="2" ref="1">
    <original>A</original>
    <variation>R</variation>
    <location>
        <position position="173"/>
    </location>
</feature>
<feature type="sequence conflict" description="In Ref. 1; BAA02365." evidence="2" ref="1">
    <original>D</original>
    <variation>H</variation>
    <location>
        <position position="374"/>
    </location>
</feature>
<dbReference type="EC" id="4.1.99.2"/>
<dbReference type="EMBL" id="D13002">
    <property type="protein sequence ID" value="BAA02365.1"/>
    <property type="molecule type" value="Genomic_DNA"/>
</dbReference>
<dbReference type="EMBL" id="AP006840">
    <property type="protein sequence ID" value="BAD41827.1"/>
    <property type="status" value="ALT_INIT"/>
    <property type="molecule type" value="Genomic_DNA"/>
</dbReference>
<dbReference type="PIR" id="A48380">
    <property type="entry name" value="A48380"/>
</dbReference>
<dbReference type="RefSeq" id="WP_043714225.1">
    <property type="nucleotide sequence ID" value="NC_006177.1"/>
</dbReference>
<dbReference type="SMR" id="Q08897"/>
<dbReference type="STRING" id="292459.STH2842"/>
<dbReference type="KEGG" id="sth:STH2842"/>
<dbReference type="eggNOG" id="COG3033">
    <property type="taxonomic scope" value="Bacteria"/>
</dbReference>
<dbReference type="HOGENOM" id="CLU_047223_0_0_9"/>
<dbReference type="OrthoDB" id="9764079at2"/>
<dbReference type="Proteomes" id="UP000000417">
    <property type="component" value="Chromosome"/>
</dbReference>
<dbReference type="GO" id="GO:0050371">
    <property type="term" value="F:tyrosine phenol-lyase activity"/>
    <property type="evidence" value="ECO:0007669"/>
    <property type="project" value="UniProtKB-UniRule"/>
</dbReference>
<dbReference type="GO" id="GO:0006570">
    <property type="term" value="P:tyrosine metabolic process"/>
    <property type="evidence" value="ECO:0007669"/>
    <property type="project" value="InterPro"/>
</dbReference>
<dbReference type="CDD" id="cd00617">
    <property type="entry name" value="Tnase_like"/>
    <property type="match status" value="1"/>
</dbReference>
<dbReference type="Gene3D" id="3.90.1150.10">
    <property type="entry name" value="Aspartate Aminotransferase, domain 1"/>
    <property type="match status" value="1"/>
</dbReference>
<dbReference type="Gene3D" id="3.40.640.10">
    <property type="entry name" value="Type I PLP-dependent aspartate aminotransferase-like (Major domain)"/>
    <property type="match status" value="1"/>
</dbReference>
<dbReference type="HAMAP" id="MF_00543">
    <property type="entry name" value="Tyr_phenol_lyase"/>
    <property type="match status" value="1"/>
</dbReference>
<dbReference type="InterPro" id="IPR001597">
    <property type="entry name" value="ArAA_b-elim_lyase/Thr_aldolase"/>
</dbReference>
<dbReference type="InterPro" id="IPR011166">
    <property type="entry name" value="Beta-eliminating_lyase"/>
</dbReference>
<dbReference type="InterPro" id="IPR015424">
    <property type="entry name" value="PyrdxlP-dep_Trfase"/>
</dbReference>
<dbReference type="InterPro" id="IPR015421">
    <property type="entry name" value="PyrdxlP-dep_Trfase_major"/>
</dbReference>
<dbReference type="InterPro" id="IPR015422">
    <property type="entry name" value="PyrdxlP-dep_Trfase_small"/>
</dbReference>
<dbReference type="InterPro" id="IPR018176">
    <property type="entry name" value="Tryptophanase_CS"/>
</dbReference>
<dbReference type="InterPro" id="IPR013441">
    <property type="entry name" value="Tyr_phenol_ly"/>
</dbReference>
<dbReference type="NCBIfam" id="NF009709">
    <property type="entry name" value="PRK13238.1"/>
    <property type="match status" value="1"/>
</dbReference>
<dbReference type="NCBIfam" id="TIGR02618">
    <property type="entry name" value="tyr_phenol_ly"/>
    <property type="match status" value="1"/>
</dbReference>
<dbReference type="PANTHER" id="PTHR32325">
    <property type="entry name" value="BETA-ELIMINATING LYASE-LIKE PROTEIN-RELATED"/>
    <property type="match status" value="1"/>
</dbReference>
<dbReference type="PANTHER" id="PTHR32325:SF4">
    <property type="entry name" value="TRYPTOPHANASE"/>
    <property type="match status" value="1"/>
</dbReference>
<dbReference type="Pfam" id="PF01212">
    <property type="entry name" value="Beta_elim_lyase"/>
    <property type="match status" value="1"/>
</dbReference>
<dbReference type="PIRSF" id="PIRSF001386">
    <property type="entry name" value="Trpase"/>
    <property type="match status" value="1"/>
</dbReference>
<dbReference type="SUPFAM" id="SSF53383">
    <property type="entry name" value="PLP-dependent transferases"/>
    <property type="match status" value="1"/>
</dbReference>
<dbReference type="PROSITE" id="PS00853">
    <property type="entry name" value="BETA_ELIM_LYASE"/>
    <property type="match status" value="1"/>
</dbReference>
<organism>
    <name type="scientific">Symbiobacterium thermophilum (strain DSM 24528 / JCM 14929 / IAM 14863 / T)</name>
    <dbReference type="NCBI Taxonomy" id="292459"/>
    <lineage>
        <taxon>Bacteria</taxon>
        <taxon>Bacillati</taxon>
        <taxon>Bacillota</taxon>
        <taxon>Clostridia</taxon>
        <taxon>Eubacteriales</taxon>
        <taxon>Symbiobacteriaceae</taxon>
        <taxon>Symbiobacterium</taxon>
    </lineage>
</organism>
<keyword id="KW-0903">Direct protein sequencing</keyword>
<keyword id="KW-0456">Lyase</keyword>
<keyword id="KW-0663">Pyridoxal phosphate</keyword>
<keyword id="KW-1185">Reference proteome</keyword>
<reference key="1">
    <citation type="journal article" date="1993" name="Appl. Microbiol. Biotechnol.">
        <title>Cloning, nucleotide sequence, and overexpression in Escherichia coli of the beta-tyrosinase gene from an obligately symbiotic thermophile, Symbiobacterium thermophilum.</title>
        <authorList>
            <person name="Hirahara T."/>
            <person name="Horinouchi S."/>
            <person name="Beppu T."/>
        </authorList>
    </citation>
    <scope>NUCLEOTIDE SEQUENCE [GENOMIC DNA]</scope>
    <scope>PROTEIN SEQUENCE OF 1-7; 270-279 AND 440-450</scope>
    <source>
        <strain>IAM 13621</strain>
    </source>
</reference>
<reference key="2">
    <citation type="journal article" date="2004" name="Nucleic Acids Res.">
        <title>Genome sequence of Symbiobacterium thermophilum, an uncultivable bacterium that depends on microbial commensalism.</title>
        <authorList>
            <person name="Ueda K."/>
            <person name="Yamashita A."/>
            <person name="Ishikawa J."/>
            <person name="Shimada M."/>
            <person name="Watsuji T."/>
            <person name="Morimura K."/>
            <person name="Ikeda H."/>
            <person name="Hattori M."/>
            <person name="Beppu T."/>
        </authorList>
    </citation>
    <scope>NUCLEOTIDE SEQUENCE [LARGE SCALE GENOMIC DNA]</scope>
    <source>
        <strain>DSM 24528 / JCM 14929 / IAM 14863 / T</strain>
    </source>
</reference>
<gene>
    <name type="primary">tpl</name>
    <name type="ordered locus">STH2842</name>
</gene>
<protein>
    <recommendedName>
        <fullName>Tyrosine phenol-lyase</fullName>
        <ecNumber>4.1.99.2</ecNumber>
    </recommendedName>
    <alternativeName>
        <fullName>Beta-tyrosinase</fullName>
    </alternativeName>
</protein>